<reference key="1">
    <citation type="journal article" date="2006" name="J. Bacteriol.">
        <title>The genome sequence of Methanosphaera stadtmanae reveals why this human intestinal archaeon is restricted to methanol and H2 for methane formation and ATP synthesis.</title>
        <authorList>
            <person name="Fricke W.F."/>
            <person name="Seedorf H."/>
            <person name="Henne A."/>
            <person name="Kruer M."/>
            <person name="Liesegang H."/>
            <person name="Hedderich R."/>
            <person name="Gottschalk G."/>
            <person name="Thauer R.K."/>
        </authorList>
    </citation>
    <scope>NUCLEOTIDE SEQUENCE [LARGE SCALE GENOMIC DNA]</scope>
    <source>
        <strain>ATCC 43021 / DSM 3091 / JCM 11832 / MCB-3</strain>
    </source>
</reference>
<sequence>MAEQEFRHMVRITRKDVDGNSTIATALTEIRGIGKAFAIAICKVLDLDQDAQIGYIDDESVKQIEAVLENPQEFGIPEWFLNRRNDYETGETKHLIESDLNMTLRDDLNRMKMIRSYKGKRHEVGLPVRGQRTKSTFRHGSSVGVSRTRPTGN</sequence>
<name>RS13_METST</name>
<accession>Q2NFZ3</accession>
<comment type="function">
    <text evidence="1">Located at the top of the head of the 30S subunit, it contacts several helices of the 16S rRNA. In the 70S ribosome it contacts the 23S rRNA (bridge B1a) and protein L5 of the 50S subunit (bridge B1b), connecting the 2 subunits; these bridges are implicated in subunit movement.</text>
</comment>
<comment type="subunit">
    <text evidence="1">Part of the 30S ribosomal subunit. Forms a loose heterodimer with protein S19. Forms two bridges to the 50S subunit in the 70S ribosome.</text>
</comment>
<comment type="similarity">
    <text evidence="1">Belongs to the universal ribosomal protein uS13 family.</text>
</comment>
<keyword id="KW-1185">Reference proteome</keyword>
<keyword id="KW-0687">Ribonucleoprotein</keyword>
<keyword id="KW-0689">Ribosomal protein</keyword>
<keyword id="KW-0694">RNA-binding</keyword>
<keyword id="KW-0699">rRNA-binding</keyword>
<gene>
    <name evidence="1" type="primary">rps13</name>
    <name type="ordered locus">Msp_0871</name>
</gene>
<protein>
    <recommendedName>
        <fullName evidence="1">Small ribosomal subunit protein uS13</fullName>
    </recommendedName>
    <alternativeName>
        <fullName evidence="3">30S ribosomal protein S13</fullName>
    </alternativeName>
</protein>
<feature type="chain" id="PRO_0000306758" description="Small ribosomal subunit protein uS13">
    <location>
        <begin position="1"/>
        <end position="153"/>
    </location>
</feature>
<feature type="region of interest" description="Disordered" evidence="2">
    <location>
        <begin position="129"/>
        <end position="153"/>
    </location>
</feature>
<feature type="compositionally biased region" description="Polar residues" evidence="2">
    <location>
        <begin position="143"/>
        <end position="153"/>
    </location>
</feature>
<dbReference type="EMBL" id="CP000102">
    <property type="protein sequence ID" value="ABC57260.1"/>
    <property type="molecule type" value="Genomic_DNA"/>
</dbReference>
<dbReference type="RefSeq" id="WP_011406459.1">
    <property type="nucleotide sequence ID" value="NC_007681.1"/>
</dbReference>
<dbReference type="SMR" id="Q2NFZ3"/>
<dbReference type="STRING" id="339860.Msp_0871"/>
<dbReference type="KEGG" id="mst:Msp_0871"/>
<dbReference type="eggNOG" id="arCOG01722">
    <property type="taxonomic scope" value="Archaea"/>
</dbReference>
<dbReference type="HOGENOM" id="CLU_103849_0_1_2"/>
<dbReference type="OrthoDB" id="372127at2157"/>
<dbReference type="Proteomes" id="UP000001931">
    <property type="component" value="Chromosome"/>
</dbReference>
<dbReference type="GO" id="GO:0005829">
    <property type="term" value="C:cytosol"/>
    <property type="evidence" value="ECO:0007669"/>
    <property type="project" value="TreeGrafter"/>
</dbReference>
<dbReference type="GO" id="GO:0015935">
    <property type="term" value="C:small ribosomal subunit"/>
    <property type="evidence" value="ECO:0007669"/>
    <property type="project" value="TreeGrafter"/>
</dbReference>
<dbReference type="GO" id="GO:0019843">
    <property type="term" value="F:rRNA binding"/>
    <property type="evidence" value="ECO:0007669"/>
    <property type="project" value="UniProtKB-UniRule"/>
</dbReference>
<dbReference type="GO" id="GO:0003735">
    <property type="term" value="F:structural constituent of ribosome"/>
    <property type="evidence" value="ECO:0007669"/>
    <property type="project" value="InterPro"/>
</dbReference>
<dbReference type="GO" id="GO:0006412">
    <property type="term" value="P:translation"/>
    <property type="evidence" value="ECO:0007669"/>
    <property type="project" value="UniProtKB-UniRule"/>
</dbReference>
<dbReference type="FunFam" id="4.10.910.10:FF:000002">
    <property type="entry name" value="40S ribosomal protein S18"/>
    <property type="match status" value="1"/>
</dbReference>
<dbReference type="Gene3D" id="1.10.8.50">
    <property type="match status" value="1"/>
</dbReference>
<dbReference type="Gene3D" id="4.10.910.10">
    <property type="entry name" value="30s ribosomal protein s13, domain 2"/>
    <property type="match status" value="1"/>
</dbReference>
<dbReference type="HAMAP" id="MF_01315">
    <property type="entry name" value="Ribosomal_uS13"/>
    <property type="match status" value="1"/>
</dbReference>
<dbReference type="InterPro" id="IPR027437">
    <property type="entry name" value="Rbsml_uS13_C"/>
</dbReference>
<dbReference type="InterPro" id="IPR001892">
    <property type="entry name" value="Ribosomal_uS13"/>
</dbReference>
<dbReference type="InterPro" id="IPR010979">
    <property type="entry name" value="Ribosomal_uS13-like_H2TH"/>
</dbReference>
<dbReference type="InterPro" id="IPR019977">
    <property type="entry name" value="Ribosomal_uS13_archaeal"/>
</dbReference>
<dbReference type="InterPro" id="IPR018269">
    <property type="entry name" value="Ribosomal_uS13_CS"/>
</dbReference>
<dbReference type="NCBIfam" id="NF003140">
    <property type="entry name" value="PRK04053.1"/>
    <property type="match status" value="1"/>
</dbReference>
<dbReference type="NCBIfam" id="TIGR03629">
    <property type="entry name" value="uS13_arch"/>
    <property type="match status" value="1"/>
</dbReference>
<dbReference type="PANTHER" id="PTHR10871">
    <property type="entry name" value="30S RIBOSOMAL PROTEIN S13/40S RIBOSOMAL PROTEIN S18"/>
    <property type="match status" value="1"/>
</dbReference>
<dbReference type="PANTHER" id="PTHR10871:SF3">
    <property type="entry name" value="SMALL RIBOSOMAL SUBUNIT PROTEIN US13"/>
    <property type="match status" value="1"/>
</dbReference>
<dbReference type="Pfam" id="PF00416">
    <property type="entry name" value="Ribosomal_S13"/>
    <property type="match status" value="1"/>
</dbReference>
<dbReference type="PIRSF" id="PIRSF002134">
    <property type="entry name" value="Ribosomal_S13"/>
    <property type="match status" value="1"/>
</dbReference>
<dbReference type="SUPFAM" id="SSF46946">
    <property type="entry name" value="S13-like H2TH domain"/>
    <property type="match status" value="1"/>
</dbReference>
<dbReference type="PROSITE" id="PS00646">
    <property type="entry name" value="RIBOSOMAL_S13_1"/>
    <property type="match status" value="1"/>
</dbReference>
<dbReference type="PROSITE" id="PS50159">
    <property type="entry name" value="RIBOSOMAL_S13_2"/>
    <property type="match status" value="1"/>
</dbReference>
<proteinExistence type="inferred from homology"/>
<evidence type="ECO:0000255" key="1">
    <source>
        <dbReference type="HAMAP-Rule" id="MF_01315"/>
    </source>
</evidence>
<evidence type="ECO:0000256" key="2">
    <source>
        <dbReference type="SAM" id="MobiDB-lite"/>
    </source>
</evidence>
<evidence type="ECO:0000305" key="3"/>
<organism>
    <name type="scientific">Methanosphaera stadtmanae (strain ATCC 43021 / DSM 3091 / JCM 11832 / MCB-3)</name>
    <dbReference type="NCBI Taxonomy" id="339860"/>
    <lineage>
        <taxon>Archaea</taxon>
        <taxon>Methanobacteriati</taxon>
        <taxon>Methanobacteriota</taxon>
        <taxon>Methanomada group</taxon>
        <taxon>Methanobacteria</taxon>
        <taxon>Methanobacteriales</taxon>
        <taxon>Methanobacteriaceae</taxon>
        <taxon>Methanosphaera</taxon>
    </lineage>
</organism>